<accession>Q6TC34</accession>
<organism>
    <name type="scientific">Pusa caspica</name>
    <name type="common">Caspian seal</name>
    <name type="synonym">Phoca caspica</name>
    <dbReference type="NCBI Taxonomy" id="693431"/>
    <lineage>
        <taxon>Eukaryota</taxon>
        <taxon>Metazoa</taxon>
        <taxon>Chordata</taxon>
        <taxon>Craniata</taxon>
        <taxon>Vertebrata</taxon>
        <taxon>Euteleostomi</taxon>
        <taxon>Mammalia</taxon>
        <taxon>Eutheria</taxon>
        <taxon>Laurasiatheria</taxon>
        <taxon>Carnivora</taxon>
        <taxon>Caniformia</taxon>
        <taxon>Pinnipedia</taxon>
        <taxon>Phocidae</taxon>
        <taxon>Phocinae</taxon>
        <taxon>Pusa</taxon>
    </lineage>
</organism>
<keyword id="KW-0010">Activator</keyword>
<keyword id="KW-0112">Calmodulin-binding</keyword>
<keyword id="KW-0963">Cytoplasm</keyword>
<keyword id="KW-0221">Differentiation</keyword>
<keyword id="KW-0238">DNA-binding</keyword>
<keyword id="KW-0539">Nucleus</keyword>
<keyword id="KW-0726">Sexual differentiation</keyword>
<keyword id="KW-0804">Transcription</keyword>
<keyword id="KW-0805">Transcription regulation</keyword>
<sequence>MFGVLNSNDHRAAVQQRNIPAFGRTSFEPWTDNPTSNYRCETGGNGRDSGQNRVRRPMNAFMVWSRDQRRKVALENPQMQNSEISKQLGYQWRMLTEAEKWPFFEEAQRLQAMHREKYPDYKYRPRRKALPQKSDKLLPAASSSMLCRQVLVDEKWYPFTYRDSCSRAAHSPMEDQLSSSRPVNIANSLLQQEHHYRSTSLGDSPETLAAHLSADPPFYPKEQLGLSDAYFP</sequence>
<reference key="1">
    <citation type="submission" date="2003-09" db="EMBL/GenBank/DDBJ databases">
        <title>A phylogeny of the pinnipeds from mitochondrial and single copy nuclear gene sequences.</title>
        <authorList>
            <person name="Kinnear M.W."/>
            <person name="Walker G."/>
            <person name="Amos W."/>
        </authorList>
    </citation>
    <scope>NUCLEOTIDE SEQUENCE [GENOMIC DNA]</scope>
</reference>
<dbReference type="EMBL" id="AY424661">
    <property type="protein sequence ID" value="AAR10372.1"/>
    <property type="molecule type" value="Genomic_DNA"/>
</dbReference>
<dbReference type="SMR" id="Q6TC34"/>
<dbReference type="GO" id="GO:0005737">
    <property type="term" value="C:cytoplasm"/>
    <property type="evidence" value="ECO:0007669"/>
    <property type="project" value="UniProtKB-SubCell"/>
</dbReference>
<dbReference type="GO" id="GO:0016607">
    <property type="term" value="C:nuclear speck"/>
    <property type="evidence" value="ECO:0007669"/>
    <property type="project" value="UniProtKB-SubCell"/>
</dbReference>
<dbReference type="GO" id="GO:0005634">
    <property type="term" value="C:nucleus"/>
    <property type="evidence" value="ECO:0000250"/>
    <property type="project" value="UniProtKB"/>
</dbReference>
<dbReference type="GO" id="GO:0005516">
    <property type="term" value="F:calmodulin binding"/>
    <property type="evidence" value="ECO:0007669"/>
    <property type="project" value="UniProtKB-KW"/>
</dbReference>
<dbReference type="GO" id="GO:0001228">
    <property type="term" value="F:DNA-binding transcription activator activity, RNA polymerase II-specific"/>
    <property type="evidence" value="ECO:0007669"/>
    <property type="project" value="TreeGrafter"/>
</dbReference>
<dbReference type="GO" id="GO:0000978">
    <property type="term" value="F:RNA polymerase II cis-regulatory region sequence-specific DNA binding"/>
    <property type="evidence" value="ECO:0007669"/>
    <property type="project" value="TreeGrafter"/>
</dbReference>
<dbReference type="GO" id="GO:0030154">
    <property type="term" value="P:cell differentiation"/>
    <property type="evidence" value="ECO:0007669"/>
    <property type="project" value="UniProtKB-KW"/>
</dbReference>
<dbReference type="GO" id="GO:0030238">
    <property type="term" value="P:male sex determination"/>
    <property type="evidence" value="ECO:0007669"/>
    <property type="project" value="InterPro"/>
</dbReference>
<dbReference type="GO" id="GO:0007548">
    <property type="term" value="P:sex differentiation"/>
    <property type="evidence" value="ECO:0007669"/>
    <property type="project" value="UniProtKB-KW"/>
</dbReference>
<dbReference type="CDD" id="cd22034">
    <property type="entry name" value="HMG-box_SoxA_SRY"/>
    <property type="match status" value="1"/>
</dbReference>
<dbReference type="FunFam" id="1.10.30.10:FF:000002">
    <property type="entry name" value="transcription factor Sox-2"/>
    <property type="match status" value="1"/>
</dbReference>
<dbReference type="Gene3D" id="1.10.30.10">
    <property type="entry name" value="High mobility group box domain"/>
    <property type="match status" value="1"/>
</dbReference>
<dbReference type="InterPro" id="IPR009071">
    <property type="entry name" value="HMG_box_dom"/>
</dbReference>
<dbReference type="InterPro" id="IPR036910">
    <property type="entry name" value="HMG_box_dom_sf"/>
</dbReference>
<dbReference type="InterPro" id="IPR017253">
    <property type="entry name" value="SRY"/>
</dbReference>
<dbReference type="InterPro" id="IPR050140">
    <property type="entry name" value="SRY-related_HMG-box_TF-like"/>
</dbReference>
<dbReference type="PANTHER" id="PTHR10270:SF161">
    <property type="entry name" value="SEX-DETERMINING REGION Y PROTEIN"/>
    <property type="match status" value="1"/>
</dbReference>
<dbReference type="PANTHER" id="PTHR10270">
    <property type="entry name" value="SOX TRANSCRIPTION FACTOR"/>
    <property type="match status" value="1"/>
</dbReference>
<dbReference type="Pfam" id="PF00505">
    <property type="entry name" value="HMG_box"/>
    <property type="match status" value="1"/>
</dbReference>
<dbReference type="PIRSF" id="PIRSF037653">
    <property type="entry name" value="SRY"/>
    <property type="match status" value="1"/>
</dbReference>
<dbReference type="SMART" id="SM00398">
    <property type="entry name" value="HMG"/>
    <property type="match status" value="1"/>
</dbReference>
<dbReference type="SUPFAM" id="SSF47095">
    <property type="entry name" value="HMG-box"/>
    <property type="match status" value="1"/>
</dbReference>
<dbReference type="PROSITE" id="PS50118">
    <property type="entry name" value="HMG_BOX_2"/>
    <property type="match status" value="1"/>
</dbReference>
<gene>
    <name type="primary">SRY</name>
    <name type="synonym">TDF</name>
</gene>
<feature type="chain" id="PRO_0000048697" description="Sex-determining region Y protein">
    <location>
        <begin position="1"/>
        <end position="232"/>
    </location>
</feature>
<feature type="DNA-binding region" description="HMG box" evidence="3">
    <location>
        <begin position="54"/>
        <end position="122"/>
    </location>
</feature>
<feature type="region of interest" description="Disordered" evidence="4">
    <location>
        <begin position="24"/>
        <end position="53"/>
    </location>
</feature>
<feature type="region of interest" description="Disordered" evidence="4">
    <location>
        <begin position="196"/>
        <end position="215"/>
    </location>
</feature>
<protein>
    <recommendedName>
        <fullName>Sex-determining region Y protein</fullName>
    </recommendedName>
    <alternativeName>
        <fullName>Testis-determining factor</fullName>
    </alternativeName>
</protein>
<name>SRY_PUSCA</name>
<comment type="function">
    <text evidence="1 2">Transcriptional regulator that controls a genetic switch in male development. It is necessary and sufficient for initiating male sex determination by directing the development of supporting cell precursors (pre-Sertoli cells) as Sertoli rather than granulosa cells. Involved in different aspects of gene regulation including promoter activation or repression. Binds to the DNA consensus sequence 5'-[AT]AACAA[AT]-3'. SRY HMG box recognizes DNA by partial intercalation in the minor groove and promotes DNA bending. Also involved in pre-mRNA splicing (By similarity). In male adult brain involved in the maintenance of motor functions of dopaminergic neurons (By similarity).</text>
</comment>
<comment type="subunit">
    <text evidence="2">Interacts with CALM, EP300, HDAC3, KPNB1, ZNF208 isoform KRAB-O, PARP1, SLC9A3R2 and WT1. The interaction with EP300 modulates its DNA-binding activity. The interaction with KPNB1 is sensitive to dissociation by Ran in the GTP-bound form. Interaction with PARP1 impaired its DNA-binding activity.</text>
</comment>
<comment type="subcellular location">
    <subcellularLocation>
        <location evidence="2">Nucleus speckle</location>
    </subcellularLocation>
    <subcellularLocation>
        <location evidence="2">Cytoplasm</location>
    </subcellularLocation>
    <subcellularLocation>
        <location evidence="2">Nucleus</location>
    </subcellularLocation>
</comment>
<comment type="similarity">
    <text evidence="5">Belongs to the SRY family.</text>
</comment>
<comment type="online information" name="Protein Spotlight">
    <link uri="https://www.proteinspotlight.org/back_issues/080"/>
    <text>The tenuous nature of sex - Issue 80 of March 2007</text>
</comment>
<evidence type="ECO:0000250" key="1">
    <source>
        <dbReference type="UniProtKB" id="P36394"/>
    </source>
</evidence>
<evidence type="ECO:0000250" key="2">
    <source>
        <dbReference type="UniProtKB" id="Q05066"/>
    </source>
</evidence>
<evidence type="ECO:0000255" key="3">
    <source>
        <dbReference type="PROSITE-ProRule" id="PRU00267"/>
    </source>
</evidence>
<evidence type="ECO:0000256" key="4">
    <source>
        <dbReference type="SAM" id="MobiDB-lite"/>
    </source>
</evidence>
<evidence type="ECO:0000305" key="5"/>
<proteinExistence type="inferred from homology"/>